<name>TIG_BRUA2</name>
<gene>
    <name evidence="1" type="primary">tig</name>
    <name type="ordered locus">BAB1_0917</name>
</gene>
<accession>Q2YNL3</accession>
<reference key="1">
    <citation type="journal article" date="2005" name="Infect. Immun.">
        <title>Whole-genome analyses of speciation events in pathogenic Brucellae.</title>
        <authorList>
            <person name="Chain P.S."/>
            <person name="Comerci D.J."/>
            <person name="Tolmasky M.E."/>
            <person name="Larimer F.W."/>
            <person name="Malfatti S.A."/>
            <person name="Vergez L.M."/>
            <person name="Aguero F."/>
            <person name="Land M.L."/>
            <person name="Ugalde R.A."/>
            <person name="Garcia E."/>
        </authorList>
    </citation>
    <scope>NUCLEOTIDE SEQUENCE [LARGE SCALE GENOMIC DNA]</scope>
    <source>
        <strain>2308</strain>
    </source>
</reference>
<proteinExistence type="inferred from homology"/>
<keyword id="KW-0131">Cell cycle</keyword>
<keyword id="KW-0132">Cell division</keyword>
<keyword id="KW-0143">Chaperone</keyword>
<keyword id="KW-0963">Cytoplasm</keyword>
<keyword id="KW-0413">Isomerase</keyword>
<keyword id="KW-1185">Reference proteome</keyword>
<keyword id="KW-0697">Rotamase</keyword>
<feature type="chain" id="PRO_0000256533" description="Trigger factor">
    <location>
        <begin position="1"/>
        <end position="471"/>
    </location>
</feature>
<feature type="domain" description="PPIase FKBP-type" evidence="1">
    <location>
        <begin position="169"/>
        <end position="254"/>
    </location>
</feature>
<feature type="region of interest" description="Disordered" evidence="2">
    <location>
        <begin position="435"/>
        <end position="471"/>
    </location>
</feature>
<feature type="compositionally biased region" description="Basic and acidic residues" evidence="2">
    <location>
        <begin position="461"/>
        <end position="471"/>
    </location>
</feature>
<dbReference type="EC" id="5.2.1.8" evidence="1"/>
<dbReference type="EMBL" id="AM040264">
    <property type="protein sequence ID" value="CAJ10873.1"/>
    <property type="status" value="ALT_INIT"/>
    <property type="molecule type" value="Genomic_DNA"/>
</dbReference>
<dbReference type="SMR" id="Q2YNL3"/>
<dbReference type="STRING" id="359391.BAB1_0917"/>
<dbReference type="KEGG" id="bmf:BAB1_0917"/>
<dbReference type="PATRIC" id="fig|359391.11.peg.3228"/>
<dbReference type="HOGENOM" id="CLU_033058_2_2_5"/>
<dbReference type="PhylomeDB" id="Q2YNL3"/>
<dbReference type="PRO" id="PR:Q2YNL3"/>
<dbReference type="Proteomes" id="UP000002719">
    <property type="component" value="Chromosome I"/>
</dbReference>
<dbReference type="GO" id="GO:0005737">
    <property type="term" value="C:cytoplasm"/>
    <property type="evidence" value="ECO:0007669"/>
    <property type="project" value="UniProtKB-SubCell"/>
</dbReference>
<dbReference type="GO" id="GO:0003755">
    <property type="term" value="F:peptidyl-prolyl cis-trans isomerase activity"/>
    <property type="evidence" value="ECO:0007669"/>
    <property type="project" value="UniProtKB-UniRule"/>
</dbReference>
<dbReference type="GO" id="GO:0044183">
    <property type="term" value="F:protein folding chaperone"/>
    <property type="evidence" value="ECO:0007669"/>
    <property type="project" value="TreeGrafter"/>
</dbReference>
<dbReference type="GO" id="GO:0043022">
    <property type="term" value="F:ribosome binding"/>
    <property type="evidence" value="ECO:0007669"/>
    <property type="project" value="TreeGrafter"/>
</dbReference>
<dbReference type="GO" id="GO:0051083">
    <property type="term" value="P:'de novo' cotranslational protein folding"/>
    <property type="evidence" value="ECO:0007669"/>
    <property type="project" value="TreeGrafter"/>
</dbReference>
<dbReference type="GO" id="GO:0051301">
    <property type="term" value="P:cell division"/>
    <property type="evidence" value="ECO:0007669"/>
    <property type="project" value="UniProtKB-KW"/>
</dbReference>
<dbReference type="GO" id="GO:0061077">
    <property type="term" value="P:chaperone-mediated protein folding"/>
    <property type="evidence" value="ECO:0007669"/>
    <property type="project" value="TreeGrafter"/>
</dbReference>
<dbReference type="GO" id="GO:0015031">
    <property type="term" value="P:protein transport"/>
    <property type="evidence" value="ECO:0007669"/>
    <property type="project" value="UniProtKB-UniRule"/>
</dbReference>
<dbReference type="GO" id="GO:0043335">
    <property type="term" value="P:protein unfolding"/>
    <property type="evidence" value="ECO:0007669"/>
    <property type="project" value="TreeGrafter"/>
</dbReference>
<dbReference type="FunFam" id="3.10.50.40:FF:000001">
    <property type="entry name" value="Trigger factor"/>
    <property type="match status" value="1"/>
</dbReference>
<dbReference type="Gene3D" id="3.10.50.40">
    <property type="match status" value="1"/>
</dbReference>
<dbReference type="Gene3D" id="3.30.70.1050">
    <property type="entry name" value="Trigger factor ribosome-binding domain"/>
    <property type="match status" value="1"/>
</dbReference>
<dbReference type="Gene3D" id="1.10.3120.10">
    <property type="entry name" value="Trigger factor, C-terminal domain"/>
    <property type="match status" value="1"/>
</dbReference>
<dbReference type="HAMAP" id="MF_00303">
    <property type="entry name" value="Trigger_factor_Tig"/>
    <property type="match status" value="1"/>
</dbReference>
<dbReference type="InterPro" id="IPR046357">
    <property type="entry name" value="PPIase_dom_sf"/>
</dbReference>
<dbReference type="InterPro" id="IPR001179">
    <property type="entry name" value="PPIase_FKBP_dom"/>
</dbReference>
<dbReference type="InterPro" id="IPR005215">
    <property type="entry name" value="Trig_fac"/>
</dbReference>
<dbReference type="InterPro" id="IPR008880">
    <property type="entry name" value="Trigger_fac_C"/>
</dbReference>
<dbReference type="InterPro" id="IPR037041">
    <property type="entry name" value="Trigger_fac_C_sf"/>
</dbReference>
<dbReference type="InterPro" id="IPR008881">
    <property type="entry name" value="Trigger_fac_ribosome-bd_bac"/>
</dbReference>
<dbReference type="InterPro" id="IPR036611">
    <property type="entry name" value="Trigger_fac_ribosome-bd_sf"/>
</dbReference>
<dbReference type="InterPro" id="IPR027304">
    <property type="entry name" value="Trigger_fact/SurA_dom_sf"/>
</dbReference>
<dbReference type="NCBIfam" id="TIGR00115">
    <property type="entry name" value="tig"/>
    <property type="match status" value="1"/>
</dbReference>
<dbReference type="PANTHER" id="PTHR30560">
    <property type="entry name" value="TRIGGER FACTOR CHAPERONE AND PEPTIDYL-PROLYL CIS/TRANS ISOMERASE"/>
    <property type="match status" value="1"/>
</dbReference>
<dbReference type="PANTHER" id="PTHR30560:SF3">
    <property type="entry name" value="TRIGGER FACTOR-LIKE PROTEIN TIG, CHLOROPLASTIC"/>
    <property type="match status" value="1"/>
</dbReference>
<dbReference type="Pfam" id="PF00254">
    <property type="entry name" value="FKBP_C"/>
    <property type="match status" value="1"/>
</dbReference>
<dbReference type="Pfam" id="PF05698">
    <property type="entry name" value="Trigger_C"/>
    <property type="match status" value="1"/>
</dbReference>
<dbReference type="Pfam" id="PF05697">
    <property type="entry name" value="Trigger_N"/>
    <property type="match status" value="1"/>
</dbReference>
<dbReference type="PIRSF" id="PIRSF003095">
    <property type="entry name" value="Trigger_factor"/>
    <property type="match status" value="1"/>
</dbReference>
<dbReference type="SUPFAM" id="SSF54534">
    <property type="entry name" value="FKBP-like"/>
    <property type="match status" value="1"/>
</dbReference>
<dbReference type="SUPFAM" id="SSF109998">
    <property type="entry name" value="Triger factor/SurA peptide-binding domain-like"/>
    <property type="match status" value="1"/>
</dbReference>
<dbReference type="SUPFAM" id="SSF102735">
    <property type="entry name" value="Trigger factor ribosome-binding domain"/>
    <property type="match status" value="1"/>
</dbReference>
<dbReference type="PROSITE" id="PS50059">
    <property type="entry name" value="FKBP_PPIASE"/>
    <property type="match status" value="1"/>
</dbReference>
<organism>
    <name type="scientific">Brucella abortus (strain 2308)</name>
    <dbReference type="NCBI Taxonomy" id="359391"/>
    <lineage>
        <taxon>Bacteria</taxon>
        <taxon>Pseudomonadati</taxon>
        <taxon>Pseudomonadota</taxon>
        <taxon>Alphaproteobacteria</taxon>
        <taxon>Hyphomicrobiales</taxon>
        <taxon>Brucellaceae</taxon>
        <taxon>Brucella/Ochrobactrum group</taxon>
        <taxon>Brucella</taxon>
    </lineage>
</organism>
<protein>
    <recommendedName>
        <fullName evidence="1">Trigger factor</fullName>
        <shortName evidence="1">TF</shortName>
        <ecNumber evidence="1">5.2.1.8</ecNumber>
    </recommendedName>
    <alternativeName>
        <fullName evidence="1">PPIase</fullName>
    </alternativeName>
</protein>
<evidence type="ECO:0000255" key="1">
    <source>
        <dbReference type="HAMAP-Rule" id="MF_00303"/>
    </source>
</evidence>
<evidence type="ECO:0000256" key="2">
    <source>
        <dbReference type="SAM" id="MobiDB-lite"/>
    </source>
</evidence>
<evidence type="ECO:0000305" key="3"/>
<sequence>MQVTETLNEGLKREIKVVVPAGDLEAKLAERLETARGRARINGFRPGKVPTAHLRKMYGKSFMAEIVNEILNDSSRSILAERNEKSATQPEVIMSEDEKEAEKVLDGKADFVFSLNYEVLPAIEVKDFSKIAVTREVVDISDEEVDEQVKRIASSTRTFETKKGKAENEDRVTIDYLGKLDGEPFEGGADNDAQLVLGSGQFIPGFEEQLIGLKAGDEKVITVTFPAEYGAAHLAGKEATFDIKVKEVAKPNELVLDDETAKKLGIESLERLRQVVREQIESQYGQITRQKVKRQILDALDGDYQFETPQKLVDAEFNNIWQQINFDLQQAGRTFEDEETTEEAAREEYRKLAERRVRLGLVLSEIGEKAGVEVTEEELQRAVYDQVRRYPGQEKEIYDFLRRTPDAVANLRAPIFEEKVVDHLLANINVTDKKVSKEELTAEDEDAASEAKPAKKAAAKKKAEEGKSEEA</sequence>
<comment type="function">
    <text evidence="1">Involved in protein export. Acts as a chaperone by maintaining the newly synthesized protein in an open conformation. Functions as a peptidyl-prolyl cis-trans isomerase.</text>
</comment>
<comment type="catalytic activity">
    <reaction evidence="1">
        <text>[protein]-peptidylproline (omega=180) = [protein]-peptidylproline (omega=0)</text>
        <dbReference type="Rhea" id="RHEA:16237"/>
        <dbReference type="Rhea" id="RHEA-COMP:10747"/>
        <dbReference type="Rhea" id="RHEA-COMP:10748"/>
        <dbReference type="ChEBI" id="CHEBI:83833"/>
        <dbReference type="ChEBI" id="CHEBI:83834"/>
        <dbReference type="EC" id="5.2.1.8"/>
    </reaction>
</comment>
<comment type="subcellular location">
    <subcellularLocation>
        <location>Cytoplasm</location>
    </subcellularLocation>
    <text evidence="1">About half TF is bound to the ribosome near the polypeptide exit tunnel while the other half is free in the cytoplasm.</text>
</comment>
<comment type="domain">
    <text evidence="1">Consists of 3 domains; the N-terminus binds the ribosome, the middle domain has PPIase activity, while the C-terminus has intrinsic chaperone activity on its own.</text>
</comment>
<comment type="similarity">
    <text evidence="1">Belongs to the FKBP-type PPIase family. Tig subfamily.</text>
</comment>
<comment type="sequence caution" evidence="3">
    <conflict type="erroneous initiation">
        <sequence resource="EMBL-CDS" id="CAJ10873"/>
    </conflict>
</comment>